<feature type="chain" id="PRO_0000174268" description="Putative odorant receptor 71a">
    <location>
        <begin position="1"/>
        <end position="378"/>
    </location>
</feature>
<feature type="topological domain" description="Cytoplasmic" evidence="2">
    <location>
        <begin position="1"/>
        <end position="37"/>
    </location>
</feature>
<feature type="transmembrane region" description="Helical; Name=1" evidence="2">
    <location>
        <begin position="38"/>
        <end position="58"/>
    </location>
</feature>
<feature type="topological domain" description="Extracellular" evidence="2">
    <location>
        <begin position="59"/>
        <end position="66"/>
    </location>
</feature>
<feature type="transmembrane region" description="Helical; Name=2" evidence="2">
    <location>
        <begin position="67"/>
        <end position="87"/>
    </location>
</feature>
<feature type="topological domain" description="Cytoplasmic" evidence="2">
    <location>
        <begin position="88"/>
        <end position="127"/>
    </location>
</feature>
<feature type="transmembrane region" description="Helical; Name=3" evidence="2">
    <location>
        <begin position="128"/>
        <end position="148"/>
    </location>
</feature>
<feature type="topological domain" description="Extracellular" evidence="2">
    <location>
        <begin position="149"/>
        <end position="166"/>
    </location>
</feature>
<feature type="transmembrane region" description="Helical; Name=4" evidence="2">
    <location>
        <begin position="167"/>
        <end position="187"/>
    </location>
</feature>
<feature type="topological domain" description="Cytoplasmic" evidence="2">
    <location>
        <begin position="188"/>
        <end position="255"/>
    </location>
</feature>
<feature type="transmembrane region" description="Helical; Name=5" evidence="2">
    <location>
        <begin position="256"/>
        <end position="276"/>
    </location>
</feature>
<feature type="topological domain" description="Extracellular" evidence="2">
    <location>
        <begin position="277"/>
        <end position="280"/>
    </location>
</feature>
<feature type="transmembrane region" description="Helical; Name=6" evidence="2">
    <location>
        <begin position="281"/>
        <end position="301"/>
    </location>
</feature>
<feature type="topological domain" description="Cytoplasmic" evidence="2">
    <location>
        <begin position="302"/>
        <end position="343"/>
    </location>
</feature>
<feature type="transmembrane region" description="Helical; Name=7" evidence="2">
    <location>
        <begin position="344"/>
        <end position="364"/>
    </location>
</feature>
<feature type="topological domain" description="Extracellular" evidence="2">
    <location>
        <begin position="365"/>
        <end position="378"/>
    </location>
</feature>
<dbReference type="EMBL" id="AE014296">
    <property type="protein sequence ID" value="AAN11784.1"/>
    <property type="molecule type" value="Genomic_DNA"/>
</dbReference>
<dbReference type="RefSeq" id="NP_524078.2">
    <property type="nucleotide sequence ID" value="NM_079354.4"/>
</dbReference>
<dbReference type="SMR" id="Q9VUK5"/>
<dbReference type="FunCoup" id="Q9VUK5">
    <property type="interactions" value="19"/>
</dbReference>
<dbReference type="STRING" id="7227.FBpp0075412"/>
<dbReference type="PaxDb" id="7227-FBpp0075412"/>
<dbReference type="EnsemblMetazoa" id="FBtr0075659">
    <property type="protein sequence ID" value="FBpp0075412"/>
    <property type="gene ID" value="FBgn0036474"/>
</dbReference>
<dbReference type="GeneID" id="39641"/>
<dbReference type="KEGG" id="dme:Dmel_CG17871"/>
<dbReference type="AGR" id="FB:FBgn0036474"/>
<dbReference type="CTD" id="39641"/>
<dbReference type="FlyBase" id="FBgn0036474">
    <property type="gene designation" value="Or71a"/>
</dbReference>
<dbReference type="VEuPathDB" id="VectorBase:FBgn0036474"/>
<dbReference type="eggNOG" id="ENOG502SV87">
    <property type="taxonomic scope" value="Eukaryota"/>
</dbReference>
<dbReference type="GeneTree" id="ENSGT00530000064740"/>
<dbReference type="HOGENOM" id="CLU_033399_6_3_1"/>
<dbReference type="InParanoid" id="Q9VUK5"/>
<dbReference type="OMA" id="VYYLSAH"/>
<dbReference type="OrthoDB" id="7548151at2759"/>
<dbReference type="PhylomeDB" id="Q9VUK5"/>
<dbReference type="BioGRID-ORCS" id="39641">
    <property type="hits" value="0 hits in 1 CRISPR screen"/>
</dbReference>
<dbReference type="GenomeRNAi" id="39641"/>
<dbReference type="PRO" id="PR:Q9VUK5"/>
<dbReference type="Proteomes" id="UP000000803">
    <property type="component" value="Chromosome 3L"/>
</dbReference>
<dbReference type="Bgee" id="FBgn0036474">
    <property type="expression patterns" value="Expressed in maxillary palp olfactory receptor neuron (Drosophila) in proboscis and 6 other cell types or tissues"/>
</dbReference>
<dbReference type="ExpressionAtlas" id="Q9VUK5">
    <property type="expression patterns" value="baseline and differential"/>
</dbReference>
<dbReference type="GO" id="GO:0032590">
    <property type="term" value="C:dendrite membrane"/>
    <property type="evidence" value="ECO:0000250"/>
    <property type="project" value="FlyBase"/>
</dbReference>
<dbReference type="GO" id="GO:0005886">
    <property type="term" value="C:plasma membrane"/>
    <property type="evidence" value="ECO:0000318"/>
    <property type="project" value="GO_Central"/>
</dbReference>
<dbReference type="GO" id="GO:0170020">
    <property type="term" value="F:ionotropic olfactory receptor activity"/>
    <property type="evidence" value="ECO:0000314"/>
    <property type="project" value="FlyBase"/>
</dbReference>
<dbReference type="GO" id="GO:0099094">
    <property type="term" value="F:ligand-gated monoatomic cation channel activity"/>
    <property type="evidence" value="ECO:0000314"/>
    <property type="project" value="FlyBase"/>
</dbReference>
<dbReference type="GO" id="GO:0005549">
    <property type="term" value="F:odorant binding"/>
    <property type="evidence" value="ECO:0000250"/>
    <property type="project" value="FlyBase"/>
</dbReference>
<dbReference type="GO" id="GO:0004984">
    <property type="term" value="F:olfactory receptor activity"/>
    <property type="evidence" value="ECO:0000318"/>
    <property type="project" value="GO_Central"/>
</dbReference>
<dbReference type="GO" id="GO:0050911">
    <property type="term" value="P:detection of chemical stimulus involved in sensory perception of smell"/>
    <property type="evidence" value="ECO:0000318"/>
    <property type="project" value="GO_Central"/>
</dbReference>
<dbReference type="GO" id="GO:0098655">
    <property type="term" value="P:monoatomic cation transmembrane transport"/>
    <property type="evidence" value="ECO:0000314"/>
    <property type="project" value="FlyBase"/>
</dbReference>
<dbReference type="GO" id="GO:0007165">
    <property type="term" value="P:signal transduction"/>
    <property type="evidence" value="ECO:0007669"/>
    <property type="project" value="UniProtKB-KW"/>
</dbReference>
<dbReference type="InterPro" id="IPR004117">
    <property type="entry name" value="7tm6_olfct_rcpt"/>
</dbReference>
<dbReference type="PANTHER" id="PTHR21137">
    <property type="entry name" value="ODORANT RECEPTOR"/>
    <property type="match status" value="1"/>
</dbReference>
<dbReference type="PANTHER" id="PTHR21137:SF37">
    <property type="entry name" value="ODORANT RECEPTOR 46A, ISOFORM B-RELATED"/>
    <property type="match status" value="1"/>
</dbReference>
<dbReference type="Pfam" id="PF02949">
    <property type="entry name" value="7tm_6"/>
    <property type="match status" value="1"/>
</dbReference>
<sequence>MDYDRIRPVRFLTGVLKWWRLWPRKESVSTPDWTNWQAYALHVPFTFLFVLLLWLEAIKSRDIQHTADVLLICLTTTALGGKVINIWKYAHVAQGILSEWSTWDLFELRSKQEVDMWRFEHRRFNRVFMFYCLCSAGVIPFIVIQPLFDIPNRLPFWMWTPFDWQQPVLFWYAFIYQATTIPIACACNVTMDAVNWYLMLHLSLCLRMLGQRLSKLQHDDKDLREKFLELIHLHQRLKQQALSIEIFISKSTFTQILVSSLIICFTIYSMQMSPVLQDLPGFAAMMQYLVAMIMQVMLPTIYGNAVIDSANMLTDSMYNSDWPDMNCRMRRLVLMFMVYLNRPVTLKAGGFFHIGLPLFTKTMNQAYSLLALLLNMNQ</sequence>
<keyword id="KW-1003">Cell membrane</keyword>
<keyword id="KW-0472">Membrane</keyword>
<keyword id="KW-0552">Olfaction</keyword>
<keyword id="KW-0675">Receptor</keyword>
<keyword id="KW-1185">Reference proteome</keyword>
<keyword id="KW-0716">Sensory transduction</keyword>
<keyword id="KW-0807">Transducer</keyword>
<keyword id="KW-0812">Transmembrane</keyword>
<keyword id="KW-1133">Transmembrane helix</keyword>
<accession>Q9VUK5</accession>
<accession>Q8IQM2</accession>
<comment type="function">
    <text evidence="1">Odorant receptor which mediates acceptance or avoidance behavior, depending on its substrates. The odorant receptor repertoire encodes a large collection of odor stimuli that vary widely in identity, intensity, and duration. May form a complex with Orco to form odorant-sensing units, providing sensitive and prolonged odorant signaling and calcium permeability (By similarity).</text>
</comment>
<comment type="subunit">
    <text evidence="1">Interacts with Orco. Complexes exist early in the endomembrane system in olfactory sensory neurons (OSNs), coupling these complexes to the conserved ciliary trafficking pathway (By similarity).</text>
</comment>
<comment type="subcellular location">
    <subcellularLocation>
        <location evidence="1">Cell membrane</location>
        <topology evidence="1">Multi-pass membrane protein</topology>
    </subcellularLocation>
</comment>
<comment type="tissue specificity">
    <text evidence="3">Expressed in olfactory sensory neurons in the maxillary palp.</text>
</comment>
<comment type="miscellaneous">
    <text>The atypical heteromeric and topological design of the odorant receptors appears to be an insect-specific solution for odor recognition, making the OR/Orco complex an attractive target for the development of highly selective insect repellents to disrupt olfactory-mediated host-seeking behaviors of insect disease vectors. Odor-evoked OR currents are independent of known G-protein-coupled second messenger pathways.</text>
</comment>
<comment type="similarity">
    <text evidence="4">Belongs to the insect chemoreceptor superfamily. Heteromeric odorant receptor channel (TC 1.A.69) family. Or2a subfamily.</text>
</comment>
<protein>
    <recommendedName>
        <fullName>Putative odorant receptor 71a</fullName>
    </recommendedName>
</protein>
<evidence type="ECO:0000250" key="1"/>
<evidence type="ECO:0000255" key="2"/>
<evidence type="ECO:0000269" key="3">
    <source>
    </source>
</evidence>
<evidence type="ECO:0000305" key="4"/>
<reference key="1">
    <citation type="journal article" date="2000" name="Science">
        <title>The genome sequence of Drosophila melanogaster.</title>
        <authorList>
            <person name="Adams M.D."/>
            <person name="Celniker S.E."/>
            <person name="Holt R.A."/>
            <person name="Evans C.A."/>
            <person name="Gocayne J.D."/>
            <person name="Amanatides P.G."/>
            <person name="Scherer S.E."/>
            <person name="Li P.W."/>
            <person name="Hoskins R.A."/>
            <person name="Galle R.F."/>
            <person name="George R.A."/>
            <person name="Lewis S.E."/>
            <person name="Richards S."/>
            <person name="Ashburner M."/>
            <person name="Henderson S.N."/>
            <person name="Sutton G.G."/>
            <person name="Wortman J.R."/>
            <person name="Yandell M.D."/>
            <person name="Zhang Q."/>
            <person name="Chen L.X."/>
            <person name="Brandon R.C."/>
            <person name="Rogers Y.-H.C."/>
            <person name="Blazej R.G."/>
            <person name="Champe M."/>
            <person name="Pfeiffer B.D."/>
            <person name="Wan K.H."/>
            <person name="Doyle C."/>
            <person name="Baxter E.G."/>
            <person name="Helt G."/>
            <person name="Nelson C.R."/>
            <person name="Miklos G.L.G."/>
            <person name="Abril J.F."/>
            <person name="Agbayani A."/>
            <person name="An H.-J."/>
            <person name="Andrews-Pfannkoch C."/>
            <person name="Baldwin D."/>
            <person name="Ballew R.M."/>
            <person name="Basu A."/>
            <person name="Baxendale J."/>
            <person name="Bayraktaroglu L."/>
            <person name="Beasley E.M."/>
            <person name="Beeson K.Y."/>
            <person name="Benos P.V."/>
            <person name="Berman B.P."/>
            <person name="Bhandari D."/>
            <person name="Bolshakov S."/>
            <person name="Borkova D."/>
            <person name="Botchan M.R."/>
            <person name="Bouck J."/>
            <person name="Brokstein P."/>
            <person name="Brottier P."/>
            <person name="Burtis K.C."/>
            <person name="Busam D.A."/>
            <person name="Butler H."/>
            <person name="Cadieu E."/>
            <person name="Center A."/>
            <person name="Chandra I."/>
            <person name="Cherry J.M."/>
            <person name="Cawley S."/>
            <person name="Dahlke C."/>
            <person name="Davenport L.B."/>
            <person name="Davies P."/>
            <person name="de Pablos B."/>
            <person name="Delcher A."/>
            <person name="Deng Z."/>
            <person name="Mays A.D."/>
            <person name="Dew I."/>
            <person name="Dietz S.M."/>
            <person name="Dodson K."/>
            <person name="Doup L.E."/>
            <person name="Downes M."/>
            <person name="Dugan-Rocha S."/>
            <person name="Dunkov B.C."/>
            <person name="Dunn P."/>
            <person name="Durbin K.J."/>
            <person name="Evangelista C.C."/>
            <person name="Ferraz C."/>
            <person name="Ferriera S."/>
            <person name="Fleischmann W."/>
            <person name="Fosler C."/>
            <person name="Gabrielian A.E."/>
            <person name="Garg N.S."/>
            <person name="Gelbart W.M."/>
            <person name="Glasser K."/>
            <person name="Glodek A."/>
            <person name="Gong F."/>
            <person name="Gorrell J.H."/>
            <person name="Gu Z."/>
            <person name="Guan P."/>
            <person name="Harris M."/>
            <person name="Harris N.L."/>
            <person name="Harvey D.A."/>
            <person name="Heiman T.J."/>
            <person name="Hernandez J.R."/>
            <person name="Houck J."/>
            <person name="Hostin D."/>
            <person name="Houston K.A."/>
            <person name="Howland T.J."/>
            <person name="Wei M.-H."/>
            <person name="Ibegwam C."/>
            <person name="Jalali M."/>
            <person name="Kalush F."/>
            <person name="Karpen G.H."/>
            <person name="Ke Z."/>
            <person name="Kennison J.A."/>
            <person name="Ketchum K.A."/>
            <person name="Kimmel B.E."/>
            <person name="Kodira C.D."/>
            <person name="Kraft C.L."/>
            <person name="Kravitz S."/>
            <person name="Kulp D."/>
            <person name="Lai Z."/>
            <person name="Lasko P."/>
            <person name="Lei Y."/>
            <person name="Levitsky A.A."/>
            <person name="Li J.H."/>
            <person name="Li Z."/>
            <person name="Liang Y."/>
            <person name="Lin X."/>
            <person name="Liu X."/>
            <person name="Mattei B."/>
            <person name="McIntosh T.C."/>
            <person name="McLeod M.P."/>
            <person name="McPherson D."/>
            <person name="Merkulov G."/>
            <person name="Milshina N.V."/>
            <person name="Mobarry C."/>
            <person name="Morris J."/>
            <person name="Moshrefi A."/>
            <person name="Mount S.M."/>
            <person name="Moy M."/>
            <person name="Murphy B."/>
            <person name="Murphy L."/>
            <person name="Muzny D.M."/>
            <person name="Nelson D.L."/>
            <person name="Nelson D.R."/>
            <person name="Nelson K.A."/>
            <person name="Nixon K."/>
            <person name="Nusskern D.R."/>
            <person name="Pacleb J.M."/>
            <person name="Palazzolo M."/>
            <person name="Pittman G.S."/>
            <person name="Pan S."/>
            <person name="Pollard J."/>
            <person name="Puri V."/>
            <person name="Reese M.G."/>
            <person name="Reinert K."/>
            <person name="Remington K."/>
            <person name="Saunders R.D.C."/>
            <person name="Scheeler F."/>
            <person name="Shen H."/>
            <person name="Shue B.C."/>
            <person name="Siden-Kiamos I."/>
            <person name="Simpson M."/>
            <person name="Skupski M.P."/>
            <person name="Smith T.J."/>
            <person name="Spier E."/>
            <person name="Spradling A.C."/>
            <person name="Stapleton M."/>
            <person name="Strong R."/>
            <person name="Sun E."/>
            <person name="Svirskas R."/>
            <person name="Tector C."/>
            <person name="Turner R."/>
            <person name="Venter E."/>
            <person name="Wang A.H."/>
            <person name="Wang X."/>
            <person name="Wang Z.-Y."/>
            <person name="Wassarman D.A."/>
            <person name="Weinstock G.M."/>
            <person name="Weissenbach J."/>
            <person name="Williams S.M."/>
            <person name="Woodage T."/>
            <person name="Worley K.C."/>
            <person name="Wu D."/>
            <person name="Yang S."/>
            <person name="Yao Q.A."/>
            <person name="Ye J."/>
            <person name="Yeh R.-F."/>
            <person name="Zaveri J.S."/>
            <person name="Zhan M."/>
            <person name="Zhang G."/>
            <person name="Zhao Q."/>
            <person name="Zheng L."/>
            <person name="Zheng X.H."/>
            <person name="Zhong F.N."/>
            <person name="Zhong W."/>
            <person name="Zhou X."/>
            <person name="Zhu S.C."/>
            <person name="Zhu X."/>
            <person name="Smith H.O."/>
            <person name="Gibbs R.A."/>
            <person name="Myers E.W."/>
            <person name="Rubin G.M."/>
            <person name="Venter J.C."/>
        </authorList>
    </citation>
    <scope>NUCLEOTIDE SEQUENCE [LARGE SCALE GENOMIC DNA]</scope>
    <source>
        <strain>Berkeley</strain>
    </source>
</reference>
<reference key="2">
    <citation type="journal article" date="2002" name="Genome Biol.">
        <title>Annotation of the Drosophila melanogaster euchromatic genome: a systematic review.</title>
        <authorList>
            <person name="Misra S."/>
            <person name="Crosby M.A."/>
            <person name="Mungall C.J."/>
            <person name="Matthews B.B."/>
            <person name="Campbell K.S."/>
            <person name="Hradecky P."/>
            <person name="Huang Y."/>
            <person name="Kaminker J.S."/>
            <person name="Millburn G.H."/>
            <person name="Prochnik S.E."/>
            <person name="Smith C.D."/>
            <person name="Tupy J.L."/>
            <person name="Whitfield E.J."/>
            <person name="Bayraktaroglu L."/>
            <person name="Berman B.P."/>
            <person name="Bettencourt B.R."/>
            <person name="Celniker S.E."/>
            <person name="de Grey A.D.N.J."/>
            <person name="Drysdale R.A."/>
            <person name="Harris N.L."/>
            <person name="Richter J."/>
            <person name="Russo S."/>
            <person name="Schroeder A.J."/>
            <person name="Shu S.Q."/>
            <person name="Stapleton M."/>
            <person name="Yamada C."/>
            <person name="Ashburner M."/>
            <person name="Gelbart W.M."/>
            <person name="Rubin G.M."/>
            <person name="Lewis S.E."/>
        </authorList>
    </citation>
    <scope>GENOME REANNOTATION</scope>
    <source>
        <strain>Berkeley</strain>
    </source>
</reference>
<reference key="3">
    <citation type="journal article" date="2000" name="Cell">
        <title>An olfactory sensory map in the fly brain.</title>
        <authorList>
            <person name="Vosshall L.B."/>
            <person name="Wong A.M."/>
            <person name="Axel R."/>
        </authorList>
    </citation>
    <scope>TISSUE SPECIFICITY</scope>
</reference>
<gene>
    <name type="primary">Or71a</name>
    <name type="ORF">CG17871</name>
</gene>
<name>OR71A_DROME</name>
<organism>
    <name type="scientific">Drosophila melanogaster</name>
    <name type="common">Fruit fly</name>
    <dbReference type="NCBI Taxonomy" id="7227"/>
    <lineage>
        <taxon>Eukaryota</taxon>
        <taxon>Metazoa</taxon>
        <taxon>Ecdysozoa</taxon>
        <taxon>Arthropoda</taxon>
        <taxon>Hexapoda</taxon>
        <taxon>Insecta</taxon>
        <taxon>Pterygota</taxon>
        <taxon>Neoptera</taxon>
        <taxon>Endopterygota</taxon>
        <taxon>Diptera</taxon>
        <taxon>Brachycera</taxon>
        <taxon>Muscomorpha</taxon>
        <taxon>Ephydroidea</taxon>
        <taxon>Drosophilidae</taxon>
        <taxon>Drosophila</taxon>
        <taxon>Sophophora</taxon>
    </lineage>
</organism>
<proteinExistence type="evidence at transcript level"/>